<organism>
    <name type="scientific">Shigella dysenteriae serotype 1 (strain Sd197)</name>
    <dbReference type="NCBI Taxonomy" id="300267"/>
    <lineage>
        <taxon>Bacteria</taxon>
        <taxon>Pseudomonadati</taxon>
        <taxon>Pseudomonadota</taxon>
        <taxon>Gammaproteobacteria</taxon>
        <taxon>Enterobacterales</taxon>
        <taxon>Enterobacteriaceae</taxon>
        <taxon>Shigella</taxon>
    </lineage>
</organism>
<gene>
    <name evidence="1" type="primary">treA</name>
    <name type="ordered locus">SDY_1246</name>
</gene>
<reference key="1">
    <citation type="journal article" date="2005" name="Nucleic Acids Res.">
        <title>Genome dynamics and diversity of Shigella species, the etiologic agents of bacillary dysentery.</title>
        <authorList>
            <person name="Yang F."/>
            <person name="Yang J."/>
            <person name="Zhang X."/>
            <person name="Chen L."/>
            <person name="Jiang Y."/>
            <person name="Yan Y."/>
            <person name="Tang X."/>
            <person name="Wang J."/>
            <person name="Xiong Z."/>
            <person name="Dong J."/>
            <person name="Xue Y."/>
            <person name="Zhu Y."/>
            <person name="Xu X."/>
            <person name="Sun L."/>
            <person name="Chen S."/>
            <person name="Nie H."/>
            <person name="Peng J."/>
            <person name="Xu J."/>
            <person name="Wang Y."/>
            <person name="Yuan Z."/>
            <person name="Wen Y."/>
            <person name="Yao Z."/>
            <person name="Shen Y."/>
            <person name="Qiang B."/>
            <person name="Hou Y."/>
            <person name="Yu J."/>
            <person name="Jin Q."/>
        </authorList>
    </citation>
    <scope>NUCLEOTIDE SEQUENCE [LARGE SCALE GENOMIC DNA]</scope>
    <source>
        <strain>Sd197</strain>
    </source>
</reference>
<feature type="signal peptide" evidence="1">
    <location>
        <begin position="1"/>
        <end position="30"/>
    </location>
</feature>
<feature type="chain" id="PRO_1000064457" description="Periplasmic trehalase">
    <location>
        <begin position="31"/>
        <end position="565"/>
    </location>
</feature>
<feature type="region of interest" description="Disordered" evidence="2">
    <location>
        <begin position="539"/>
        <end position="565"/>
    </location>
</feature>
<feature type="active site" description="Proton donor/acceptor" evidence="1">
    <location>
        <position position="312"/>
    </location>
</feature>
<feature type="active site" description="Proton donor/acceptor" evidence="1">
    <location>
        <position position="496"/>
    </location>
</feature>
<feature type="binding site" evidence="1">
    <location>
        <position position="152"/>
    </location>
    <ligand>
        <name>substrate</name>
    </ligand>
</feature>
<feature type="binding site" evidence="1">
    <location>
        <begin position="159"/>
        <end position="160"/>
    </location>
    <ligand>
        <name>substrate</name>
    </ligand>
</feature>
<feature type="binding site" evidence="1">
    <location>
        <position position="196"/>
    </location>
    <ligand>
        <name>substrate</name>
    </ligand>
</feature>
<feature type="binding site" evidence="1">
    <location>
        <begin position="205"/>
        <end position="207"/>
    </location>
    <ligand>
        <name>substrate</name>
    </ligand>
</feature>
<feature type="binding site" evidence="1">
    <location>
        <begin position="277"/>
        <end position="279"/>
    </location>
    <ligand>
        <name>substrate</name>
    </ligand>
</feature>
<feature type="binding site" evidence="1">
    <location>
        <position position="310"/>
    </location>
    <ligand>
        <name>substrate</name>
    </ligand>
</feature>
<feature type="binding site" evidence="1">
    <location>
        <position position="511"/>
    </location>
    <ligand>
        <name>substrate</name>
    </ligand>
</feature>
<name>TREA_SHIDS</name>
<evidence type="ECO:0000255" key="1">
    <source>
        <dbReference type="HAMAP-Rule" id="MF_01060"/>
    </source>
</evidence>
<evidence type="ECO:0000256" key="2">
    <source>
        <dbReference type="SAM" id="MobiDB-lite"/>
    </source>
</evidence>
<comment type="function">
    <text evidence="1">Provides the cells with the ability to utilize trehalose at high osmolarity by splitting it into glucose molecules that can subsequently be taken up by the phosphotransferase-mediated uptake system.</text>
</comment>
<comment type="catalytic activity">
    <reaction evidence="1">
        <text>alpha,alpha-trehalose + H2O = alpha-D-glucose + beta-D-glucose</text>
        <dbReference type="Rhea" id="RHEA:32675"/>
        <dbReference type="ChEBI" id="CHEBI:15377"/>
        <dbReference type="ChEBI" id="CHEBI:15903"/>
        <dbReference type="ChEBI" id="CHEBI:16551"/>
        <dbReference type="ChEBI" id="CHEBI:17925"/>
        <dbReference type="EC" id="3.2.1.28"/>
    </reaction>
</comment>
<comment type="subunit">
    <text evidence="1">Monomer.</text>
</comment>
<comment type="subcellular location">
    <subcellularLocation>
        <location evidence="1">Periplasm</location>
    </subcellularLocation>
</comment>
<comment type="similarity">
    <text evidence="1">Belongs to the glycosyl hydrolase 37 family.</text>
</comment>
<sequence>MKSPAPSRPQKMALIPACIFLCFAALSVQAEETSVTPQPPDILLGPLFNDVQNAKLFPDQKTFAGAVPNSDPLMILADYRMQQNQSGFDLRHFVNVNFTLPKEGEKYVPPEGQSLREHIDGLWPILTRSTENTEKWDSLLPLPEPYVVPGGRFREVYYWDSYFTMLGLAESGHWDKVADMVANFAHEIDTYGHIPNGNRSYYLSRSQPPFFALMVELLAQHEGDAALKQYLPQMQKEYAYWMDGVENLQAGQQEKRVVKLQDGTLLNRYWDDRDTPRPESWVEDIATAKSNPNRPATEIYRDLRSAAASGWDFSSRWMDNPQQLNTLRTTSIVPVDLNSLMFKMEKILARASKAAGDNAMANQYETLANARQKGIEKYLWNDQQGWYADYDLKSHKVRNQLTAAALFPLYVNAAAKDRANKMATATKTHLLQPGGLNTTSVKSGQQWDAPNGWAPLQWVATEGLQNYGQKEVAMDISWHFLTNVQHTYDREKKLVEKYDVSTTGTGGGGGEYPLQDGFGWTNGVTLKMLDLICPKEQPCDNVPATRPLSESTTQPVKPKEAEPTL</sequence>
<keyword id="KW-0326">Glycosidase</keyword>
<keyword id="KW-0378">Hydrolase</keyword>
<keyword id="KW-0574">Periplasm</keyword>
<keyword id="KW-1185">Reference proteome</keyword>
<keyword id="KW-0732">Signal</keyword>
<accession>Q32H09</accession>
<proteinExistence type="inferred from homology"/>
<dbReference type="EC" id="3.2.1.28" evidence="1"/>
<dbReference type="EMBL" id="CP000034">
    <property type="protein sequence ID" value="ABB61397.1"/>
    <property type="molecule type" value="Genomic_DNA"/>
</dbReference>
<dbReference type="RefSeq" id="WP_000841751.1">
    <property type="nucleotide sequence ID" value="NC_007606.1"/>
</dbReference>
<dbReference type="RefSeq" id="YP_402887.1">
    <property type="nucleotide sequence ID" value="NC_007606.1"/>
</dbReference>
<dbReference type="SMR" id="Q32H09"/>
<dbReference type="STRING" id="300267.SDY_1246"/>
<dbReference type="CAZy" id="GH37">
    <property type="family name" value="Glycoside Hydrolase Family 37"/>
</dbReference>
<dbReference type="EnsemblBacteria" id="ABB61397">
    <property type="protein sequence ID" value="ABB61397"/>
    <property type="gene ID" value="SDY_1246"/>
</dbReference>
<dbReference type="KEGG" id="sdy:SDY_1246"/>
<dbReference type="PATRIC" id="fig|300267.13.peg.1478"/>
<dbReference type="HOGENOM" id="CLU_006451_3_1_6"/>
<dbReference type="Proteomes" id="UP000002716">
    <property type="component" value="Chromosome"/>
</dbReference>
<dbReference type="GO" id="GO:0042597">
    <property type="term" value="C:periplasmic space"/>
    <property type="evidence" value="ECO:0007669"/>
    <property type="project" value="UniProtKB-SubCell"/>
</dbReference>
<dbReference type="GO" id="GO:0004555">
    <property type="term" value="F:alpha,alpha-trehalase activity"/>
    <property type="evidence" value="ECO:0007669"/>
    <property type="project" value="UniProtKB-UniRule"/>
</dbReference>
<dbReference type="GO" id="GO:0071474">
    <property type="term" value="P:cellular hyperosmotic response"/>
    <property type="evidence" value="ECO:0007669"/>
    <property type="project" value="InterPro"/>
</dbReference>
<dbReference type="GO" id="GO:0005993">
    <property type="term" value="P:trehalose catabolic process"/>
    <property type="evidence" value="ECO:0007669"/>
    <property type="project" value="InterPro"/>
</dbReference>
<dbReference type="FunFam" id="1.50.10.10:FF:000003">
    <property type="entry name" value="Cytoplasmic trehalase"/>
    <property type="match status" value="1"/>
</dbReference>
<dbReference type="Gene3D" id="1.50.10.10">
    <property type="match status" value="1"/>
</dbReference>
<dbReference type="HAMAP" id="MF_01060">
    <property type="entry name" value="Peripl_trehalase"/>
    <property type="match status" value="1"/>
</dbReference>
<dbReference type="InterPro" id="IPR008928">
    <property type="entry name" value="6-hairpin_glycosidase_sf"/>
</dbReference>
<dbReference type="InterPro" id="IPR012341">
    <property type="entry name" value="6hp_glycosidase-like_sf"/>
</dbReference>
<dbReference type="InterPro" id="IPR001661">
    <property type="entry name" value="Glyco_hydro_37"/>
</dbReference>
<dbReference type="InterPro" id="IPR018232">
    <property type="entry name" value="Glyco_hydro_37_CS"/>
</dbReference>
<dbReference type="InterPro" id="IPR023720">
    <property type="entry name" value="Trehalase_periplasmic"/>
</dbReference>
<dbReference type="NCBIfam" id="NF009773">
    <property type="entry name" value="PRK13270.1"/>
    <property type="match status" value="1"/>
</dbReference>
<dbReference type="NCBIfam" id="NF009774">
    <property type="entry name" value="PRK13271.1"/>
    <property type="match status" value="1"/>
</dbReference>
<dbReference type="PANTHER" id="PTHR23403">
    <property type="entry name" value="TREHALASE"/>
    <property type="match status" value="1"/>
</dbReference>
<dbReference type="PANTHER" id="PTHR23403:SF1">
    <property type="entry name" value="TREHALASE"/>
    <property type="match status" value="1"/>
</dbReference>
<dbReference type="Pfam" id="PF01204">
    <property type="entry name" value="Trehalase"/>
    <property type="match status" value="1"/>
</dbReference>
<dbReference type="PRINTS" id="PR00744">
    <property type="entry name" value="GLHYDRLASE37"/>
</dbReference>
<dbReference type="SUPFAM" id="SSF48208">
    <property type="entry name" value="Six-hairpin glycosidases"/>
    <property type="match status" value="1"/>
</dbReference>
<dbReference type="PROSITE" id="PS00927">
    <property type="entry name" value="TREHALASE_1"/>
    <property type="match status" value="1"/>
</dbReference>
<dbReference type="PROSITE" id="PS00928">
    <property type="entry name" value="TREHALASE_2"/>
    <property type="match status" value="1"/>
</dbReference>
<protein>
    <recommendedName>
        <fullName evidence="1">Periplasmic trehalase</fullName>
        <ecNumber evidence="1">3.2.1.28</ecNumber>
    </recommendedName>
    <alternativeName>
        <fullName evidence="1">Alpha,alpha-trehalase</fullName>
    </alternativeName>
    <alternativeName>
        <fullName evidence="1">Alpha,alpha-trehalose glucohydrolase</fullName>
    </alternativeName>
</protein>